<protein>
    <recommendedName>
        <fullName>Putative movement protein</fullName>
    </recommendedName>
</protein>
<feature type="chain" id="PRO_0000402505" description="Putative movement protein">
    <location>
        <begin position="1"/>
        <end position="420"/>
    </location>
</feature>
<feature type="region of interest" description="Disordered" evidence="1">
    <location>
        <begin position="1"/>
        <end position="77"/>
    </location>
</feature>
<feature type="region of interest" description="Disordered" evidence="1">
    <location>
        <begin position="137"/>
        <end position="181"/>
    </location>
</feature>
<feature type="region of interest" description="Disordered" evidence="1">
    <location>
        <begin position="195"/>
        <end position="219"/>
    </location>
</feature>
<feature type="region of interest" description="Disordered" evidence="1">
    <location>
        <begin position="235"/>
        <end position="281"/>
    </location>
</feature>
<feature type="region of interest" description="Disordered" evidence="1">
    <location>
        <begin position="327"/>
        <end position="370"/>
    </location>
</feature>
<feature type="region of interest" description="Disordered" evidence="1">
    <location>
        <begin position="396"/>
        <end position="420"/>
    </location>
</feature>
<feature type="compositionally biased region" description="Low complexity" evidence="1">
    <location>
        <begin position="1"/>
        <end position="18"/>
    </location>
</feature>
<feature type="compositionally biased region" description="Low complexity" evidence="1">
    <location>
        <begin position="30"/>
        <end position="59"/>
    </location>
</feature>
<feature type="compositionally biased region" description="Pro residues" evidence="1">
    <location>
        <begin position="60"/>
        <end position="69"/>
    </location>
</feature>
<feature type="compositionally biased region" description="Polar residues" evidence="1">
    <location>
        <begin position="137"/>
        <end position="157"/>
    </location>
</feature>
<feature type="compositionally biased region" description="Low complexity" evidence="1">
    <location>
        <begin position="158"/>
        <end position="181"/>
    </location>
</feature>
<feature type="compositionally biased region" description="Polar residues" evidence="1">
    <location>
        <begin position="253"/>
        <end position="263"/>
    </location>
</feature>
<feature type="compositionally biased region" description="Low complexity" evidence="1">
    <location>
        <begin position="327"/>
        <end position="348"/>
    </location>
</feature>
<gene>
    <name type="ORF">ORF2</name>
</gene>
<organism>
    <name type="scientific">Maize rayado fino virus (isolate Costa Rica/Guapiles)</name>
    <name type="common">MRFV</name>
    <dbReference type="NCBI Taxonomy" id="652669"/>
    <lineage>
        <taxon>Viruses</taxon>
        <taxon>Riboviria</taxon>
        <taxon>Orthornavirae</taxon>
        <taxon>Kitrinoviricota</taxon>
        <taxon>Alsuviricetes</taxon>
        <taxon>Tymovirales</taxon>
        <taxon>Tymoviridae</taxon>
        <taxon>Marafivirus</taxon>
        <taxon>Marafivirus maydis</taxon>
    </lineage>
</organism>
<comment type="function">
    <text evidence="2">Cell-to-cell movement.</text>
</comment>
<keyword id="KW-1185">Reference proteome</keyword>
<keyword id="KW-0813">Transport</keyword>
<keyword id="KW-0916">Viral movement protein</keyword>
<evidence type="ECO:0000256" key="1">
    <source>
        <dbReference type="SAM" id="MobiDB-lite"/>
    </source>
</evidence>
<evidence type="ECO:0000305" key="2"/>
<reference key="1">
    <citation type="journal article" date="2001" name="Virology">
        <title>Molecular characterization of the genome of Maize rayado fino virus, the type member of the genus Marafivirus.</title>
        <authorList>
            <person name="Hammond R.W."/>
            <person name="Ramirez P."/>
        </authorList>
    </citation>
    <scope>NUCLEOTIDE SEQUENCE [GENOMIC RNA]</scope>
</reference>
<reference key="2">
    <citation type="submission" date="2019-07" db="EMBL/GenBank/DDBJ databases">
        <authorList>
            <person name="Hammond R.W."/>
            <person name="Ramirez P."/>
        </authorList>
    </citation>
    <scope>SEQUENCE REVISION</scope>
</reference>
<accession>Q91TW8</accession>
<organismHost>
    <name type="scientific">Zea mays</name>
    <name type="common">Maize</name>
    <dbReference type="NCBI Taxonomy" id="4577"/>
</organismHost>
<proteinExistence type="predicted"/>
<name>MOVP_MRFVC</name>
<sequence>MPLTPTPSTRPSRPTSFSMSGPTTLGVRLTSCSSSLRSSPSSSPDSPTSPTSSTTGSCPKTPPGTPPLPRTSRTARPSSCMMLSCITPQGRSLTSFSSVPSSRRSMPPLSFRLSRASRISRSIRNFTASVSRVLTLSMSRRATQPPTTRSRVRPSTGSRPPVSPLVTSSSPSPFSTLSARSIPSSSSVAALPSFRPKTSLPSAFRTPSPSPLLPPSTRTFVTGWSPARCTTRSSIMSEPSAPFGLPTPPASSGLRSASLSTAGSPLPPGTTFSTSRSRPPPFVPTPRIPFSSRPSLACPTGFAPTLGRSGAWLPPRPLSLPGPLPVPSAGSSPFTPTVSGCSASTSSAGGSGLVSHSMAPSQGSFGRPIQPAARQCSLPTQPLSAKSLLVWQTGVLPPPSGRVCSPRPLRRPGSPTQPWP</sequence>
<dbReference type="EMBL" id="AF265566">
    <property type="protein sequence ID" value="AAK52839.2"/>
    <property type="molecule type" value="Genomic_RNA"/>
</dbReference>
<dbReference type="RefSeq" id="NP_115455.1">
    <property type="nucleotide sequence ID" value="NC_002786.1"/>
</dbReference>
<dbReference type="KEGG" id="vg:921088"/>
<dbReference type="Proteomes" id="UP000000400">
    <property type="component" value="Segment"/>
</dbReference>
<dbReference type="GO" id="GO:0046740">
    <property type="term" value="P:transport of virus in host, cell to cell"/>
    <property type="evidence" value="ECO:0007669"/>
    <property type="project" value="UniProtKB-KW"/>
</dbReference>